<keyword id="KW-0119">Carbohydrate metabolism</keyword>
<keyword id="KW-0320">Glycogen biosynthesis</keyword>
<keyword id="KW-0321">Glycogen metabolism</keyword>
<keyword id="KW-0328">Glycosyltransferase</keyword>
<keyword id="KW-0808">Transferase</keyword>
<comment type="function">
    <text evidence="1">Catalyzes the formation of the alpha-1,6-glucosidic linkages in glycogen by scission of a 1,4-alpha-linked oligosaccharide from growing alpha-1,4-glucan chains and the subsequent attachment of the oligosaccharide to the alpha-1,6 position.</text>
</comment>
<comment type="catalytic activity">
    <reaction>
        <text>Transfers a segment of a (1-&gt;4)-alpha-D-glucan chain to a primary hydroxy group in a similar glucan chain.</text>
        <dbReference type="EC" id="2.4.1.18"/>
    </reaction>
</comment>
<comment type="biophysicochemical properties">
    <temperatureDependence>
        <text>Optimum temperature is about 55 degrees Celsius.</text>
    </temperatureDependence>
</comment>
<comment type="pathway">
    <text>Glycan biosynthesis; glycogen biosynthesis.</text>
</comment>
<comment type="subunit">
    <text evidence="1">Monomer.</text>
</comment>
<comment type="similarity">
    <text evidence="2">Belongs to the glycosyl hydrolase 13 family. GlgB subfamily.</text>
</comment>
<gene>
    <name type="primary">glgB</name>
</gene>
<feature type="chain" id="PRO_0000188682" description="1,4-alpha-glucan branching enzyme GlgB">
    <location>
        <begin position="1"/>
        <end position="639"/>
    </location>
</feature>
<feature type="active site" description="Nucleophile" evidence="1">
    <location>
        <position position="309"/>
    </location>
</feature>
<feature type="active site" description="Proton donor" evidence="1">
    <location>
        <position position="352"/>
    </location>
</feature>
<accession>P30538</accession>
<reference key="1">
    <citation type="journal article" date="1991" name="Mol. Gen. Genet.">
        <title>Molecular cloning and nucleotide sequence of the glycogen branching enzyme gene (glgB) from Bacillus stearothermophilus and expression in Escherichia coli and Bacillus subtilis.</title>
        <authorList>
            <person name="Kiel J.A.K.W."/>
            <person name="Boels J.M."/>
            <person name="Beldman G."/>
            <person name="Venema G."/>
        </authorList>
    </citation>
    <scope>NUCLEOTIDE SEQUENCE [GENOMIC DNA]</scope>
    <source>
        <strain>1503-4R</strain>
    </source>
</reference>
<sequence>MIAVGPTDLEIYLFHEGSLYKSYELFGAHVIKKNGMVGTRFCVWAPHAREVRLVGSFNEWNGTNFNLMKVSNQGVWMIFIPENLEGHLYKYEITTNDGNVLLKSDPYAFYSELRPHTASIVYNIKGYQWNDQTWRRKKQRKRIYDQPLFIYELHFGSWKKKEDGSFYTYQEMAEELIPYVLEHGFTHIELLPLVEHPFDRSWGYQGIGYYSATSRYGTPHDLMYFIDRCHQAGIGVILDWVPGHFCKDSHGLYMFDGAPAYEYANMQDRENYVWGTANFDLGKPEVRSFLISNALFWMEYFHVDGFRVDAVANMLYWPNSDVLYKNTYAVEFLQKLNETVFAYDPNILMIAEDSTDWPRVTAPTYDGGLGFNYKWNMGWMNDILTYMETPPEHRKYVHNKVTFSLLYAYSENFILPFSHDEVVHGKKSLLSKMPGTYEEKFAQLRLLYGYLLTHPGKKLLFMGGEFGQFDEWKDLEQLDWMLFDFDMHRNMNMYVKELLKCYKRYKPLYELDHSPDGFEWIDVHNAEQSIFSFIRRGKKEDDLLIVVCNFTNKVYHGYKVGVPLFTRYREVINSDAIQFGGFGNINPKPIAAMEGPFHGKPYHIQMTIPPFGISILRPVKKGSVKSFMKTPHPPSHGAS</sequence>
<name>GLGB_GEOSE</name>
<proteinExistence type="evidence at protein level"/>
<evidence type="ECO:0000250" key="1"/>
<evidence type="ECO:0000305" key="2"/>
<organism>
    <name type="scientific">Geobacillus stearothermophilus</name>
    <name type="common">Bacillus stearothermophilus</name>
    <dbReference type="NCBI Taxonomy" id="1422"/>
    <lineage>
        <taxon>Bacteria</taxon>
        <taxon>Bacillati</taxon>
        <taxon>Bacillota</taxon>
        <taxon>Bacilli</taxon>
        <taxon>Bacillales</taxon>
        <taxon>Anoxybacillaceae</taxon>
        <taxon>Geobacillus</taxon>
    </lineage>
</organism>
<dbReference type="EC" id="2.4.1.18"/>
<dbReference type="EMBL" id="M35089">
    <property type="protein sequence ID" value="AAA22482.1"/>
    <property type="molecule type" value="Genomic_DNA"/>
</dbReference>
<dbReference type="PIR" id="S18599">
    <property type="entry name" value="S18599"/>
</dbReference>
<dbReference type="SMR" id="P30538"/>
<dbReference type="CAZy" id="CBM48">
    <property type="family name" value="Carbohydrate-Binding Module Family 48"/>
</dbReference>
<dbReference type="CAZy" id="GH13">
    <property type="family name" value="Glycoside Hydrolase Family 13"/>
</dbReference>
<dbReference type="BRENDA" id="2.4.1.18">
    <property type="organism ID" value="623"/>
</dbReference>
<dbReference type="UniPathway" id="UPA00164"/>
<dbReference type="GO" id="GO:0005829">
    <property type="term" value="C:cytosol"/>
    <property type="evidence" value="ECO:0007669"/>
    <property type="project" value="TreeGrafter"/>
</dbReference>
<dbReference type="GO" id="GO:0003844">
    <property type="term" value="F:1,4-alpha-glucan branching enzyme activity"/>
    <property type="evidence" value="ECO:0007669"/>
    <property type="project" value="UniProtKB-UniRule"/>
</dbReference>
<dbReference type="GO" id="GO:0043169">
    <property type="term" value="F:cation binding"/>
    <property type="evidence" value="ECO:0007669"/>
    <property type="project" value="InterPro"/>
</dbReference>
<dbReference type="GO" id="GO:0004553">
    <property type="term" value="F:hydrolase activity, hydrolyzing O-glycosyl compounds"/>
    <property type="evidence" value="ECO:0007669"/>
    <property type="project" value="InterPro"/>
</dbReference>
<dbReference type="GO" id="GO:0005978">
    <property type="term" value="P:glycogen biosynthetic process"/>
    <property type="evidence" value="ECO:0007669"/>
    <property type="project" value="UniProtKB-UniRule"/>
</dbReference>
<dbReference type="CDD" id="cd11322">
    <property type="entry name" value="AmyAc_Glg_BE"/>
    <property type="match status" value="1"/>
</dbReference>
<dbReference type="CDD" id="cd02855">
    <property type="entry name" value="E_set_GBE_prok_N"/>
    <property type="match status" value="1"/>
</dbReference>
<dbReference type="FunFam" id="2.60.40.10:FF:000169">
    <property type="entry name" value="1,4-alpha-glucan branching enzyme GlgB"/>
    <property type="match status" value="1"/>
</dbReference>
<dbReference type="FunFam" id="2.60.40.1180:FF:000002">
    <property type="entry name" value="1,4-alpha-glucan branching enzyme GlgB"/>
    <property type="match status" value="1"/>
</dbReference>
<dbReference type="FunFam" id="3.20.20.80:FF:000003">
    <property type="entry name" value="1,4-alpha-glucan branching enzyme GlgB"/>
    <property type="match status" value="1"/>
</dbReference>
<dbReference type="Gene3D" id="3.20.20.80">
    <property type="entry name" value="Glycosidases"/>
    <property type="match status" value="1"/>
</dbReference>
<dbReference type="Gene3D" id="2.60.40.1180">
    <property type="entry name" value="Golgi alpha-mannosidase II"/>
    <property type="match status" value="1"/>
</dbReference>
<dbReference type="Gene3D" id="2.60.40.10">
    <property type="entry name" value="Immunoglobulins"/>
    <property type="match status" value="1"/>
</dbReference>
<dbReference type="HAMAP" id="MF_00685">
    <property type="entry name" value="GlgB"/>
    <property type="match status" value="1"/>
</dbReference>
<dbReference type="InterPro" id="IPR006048">
    <property type="entry name" value="A-amylase/branching_C"/>
</dbReference>
<dbReference type="InterPro" id="IPR037439">
    <property type="entry name" value="Branching_enzy"/>
</dbReference>
<dbReference type="InterPro" id="IPR006407">
    <property type="entry name" value="GlgB"/>
</dbReference>
<dbReference type="InterPro" id="IPR044143">
    <property type="entry name" value="GlgB_N_E_set_prok"/>
</dbReference>
<dbReference type="InterPro" id="IPR006047">
    <property type="entry name" value="Glyco_hydro_13_cat_dom"/>
</dbReference>
<dbReference type="InterPro" id="IPR004193">
    <property type="entry name" value="Glyco_hydro_13_N"/>
</dbReference>
<dbReference type="InterPro" id="IPR013780">
    <property type="entry name" value="Glyco_hydro_b"/>
</dbReference>
<dbReference type="InterPro" id="IPR017853">
    <property type="entry name" value="Glycoside_hydrolase_SF"/>
</dbReference>
<dbReference type="InterPro" id="IPR013783">
    <property type="entry name" value="Ig-like_fold"/>
</dbReference>
<dbReference type="InterPro" id="IPR014756">
    <property type="entry name" value="Ig_E-set"/>
</dbReference>
<dbReference type="NCBIfam" id="TIGR01515">
    <property type="entry name" value="branching_enzym"/>
    <property type="match status" value="1"/>
</dbReference>
<dbReference type="NCBIfam" id="NF003811">
    <property type="entry name" value="PRK05402.1"/>
    <property type="match status" value="1"/>
</dbReference>
<dbReference type="NCBIfam" id="NF008967">
    <property type="entry name" value="PRK12313.1"/>
    <property type="match status" value="1"/>
</dbReference>
<dbReference type="PANTHER" id="PTHR43651">
    <property type="entry name" value="1,4-ALPHA-GLUCAN-BRANCHING ENZYME"/>
    <property type="match status" value="1"/>
</dbReference>
<dbReference type="PANTHER" id="PTHR43651:SF3">
    <property type="entry name" value="1,4-ALPHA-GLUCAN-BRANCHING ENZYME"/>
    <property type="match status" value="1"/>
</dbReference>
<dbReference type="Pfam" id="PF00128">
    <property type="entry name" value="Alpha-amylase"/>
    <property type="match status" value="2"/>
</dbReference>
<dbReference type="Pfam" id="PF02806">
    <property type="entry name" value="Alpha-amylase_C"/>
    <property type="match status" value="1"/>
</dbReference>
<dbReference type="Pfam" id="PF02922">
    <property type="entry name" value="CBM_48"/>
    <property type="match status" value="1"/>
</dbReference>
<dbReference type="PIRSF" id="PIRSF000463">
    <property type="entry name" value="GlgB"/>
    <property type="match status" value="1"/>
</dbReference>
<dbReference type="SMART" id="SM00642">
    <property type="entry name" value="Aamy"/>
    <property type="match status" value="1"/>
</dbReference>
<dbReference type="SUPFAM" id="SSF51445">
    <property type="entry name" value="(Trans)glycosidases"/>
    <property type="match status" value="1"/>
</dbReference>
<dbReference type="SUPFAM" id="SSF81296">
    <property type="entry name" value="E set domains"/>
    <property type="match status" value="1"/>
</dbReference>
<dbReference type="SUPFAM" id="SSF51011">
    <property type="entry name" value="Glycosyl hydrolase domain"/>
    <property type="match status" value="1"/>
</dbReference>
<protein>
    <recommendedName>
        <fullName>1,4-alpha-glucan branching enzyme GlgB</fullName>
        <ecNumber>2.4.1.18</ecNumber>
    </recommendedName>
    <alternativeName>
        <fullName>1,4-alpha-D-glucan:1,4-alpha-D-glucan 6-glucosyl-transferase</fullName>
    </alternativeName>
    <alternativeName>
        <fullName>Alpha-(1-&gt;4)-glucan branching enzyme</fullName>
    </alternativeName>
    <alternativeName>
        <fullName>Glycogen branching enzyme</fullName>
        <shortName>BE</shortName>
    </alternativeName>
</protein>